<gene>
    <name evidence="1" type="primary">murQ</name>
    <name type="ordered locus">LBA1704</name>
</gene>
<feature type="chain" id="PRO_0000249629" description="N-acetylmuramic acid 6-phosphate etherase">
    <location>
        <begin position="1"/>
        <end position="298"/>
    </location>
</feature>
<feature type="domain" description="SIS" evidence="1">
    <location>
        <begin position="55"/>
        <end position="218"/>
    </location>
</feature>
<feature type="active site" description="Proton donor" evidence="1">
    <location>
        <position position="83"/>
    </location>
</feature>
<feature type="active site" evidence="1">
    <location>
        <position position="114"/>
    </location>
</feature>
<comment type="function">
    <text evidence="1">Specifically catalyzes the cleavage of the D-lactyl ether substituent of MurNAc 6-phosphate, producing GlcNAc 6-phosphate and D-lactate.</text>
</comment>
<comment type="catalytic activity">
    <reaction evidence="1">
        <text>N-acetyl-D-muramate 6-phosphate + H2O = N-acetyl-D-glucosamine 6-phosphate + (R)-lactate</text>
        <dbReference type="Rhea" id="RHEA:26410"/>
        <dbReference type="ChEBI" id="CHEBI:15377"/>
        <dbReference type="ChEBI" id="CHEBI:16004"/>
        <dbReference type="ChEBI" id="CHEBI:57513"/>
        <dbReference type="ChEBI" id="CHEBI:58722"/>
        <dbReference type="EC" id="4.2.1.126"/>
    </reaction>
</comment>
<comment type="pathway">
    <text evidence="1">Amino-sugar metabolism; N-acetylmuramate degradation.</text>
</comment>
<comment type="subunit">
    <text evidence="1">Homodimer.</text>
</comment>
<comment type="miscellaneous">
    <text evidence="1">A lyase-type mechanism (elimination/hydration) is suggested for the cleavage of the lactyl ether bond of MurNAc 6-phosphate, with the formation of an alpha,beta-unsaturated aldehyde intermediate with (E)-stereochemistry, followed by the syn addition of water to give product.</text>
</comment>
<comment type="similarity">
    <text evidence="1">Belongs to the GCKR-like family. MurNAc-6-P etherase subfamily.</text>
</comment>
<name>MURQ_LACAC</name>
<reference key="1">
    <citation type="journal article" date="2005" name="Proc. Natl. Acad. Sci. U.S.A.">
        <title>Complete genome sequence of the probiotic lactic acid bacterium Lactobacillus acidophilus NCFM.</title>
        <authorList>
            <person name="Altermann E."/>
            <person name="Russell W.M."/>
            <person name="Azcarate-Peril M.A."/>
            <person name="Barrangou R."/>
            <person name="Buck B.L."/>
            <person name="McAuliffe O."/>
            <person name="Souther N."/>
            <person name="Dobson A."/>
            <person name="Duong T."/>
            <person name="Callanan M."/>
            <person name="Lick S."/>
            <person name="Hamrick A."/>
            <person name="Cano R."/>
            <person name="Klaenhammer T.R."/>
        </authorList>
    </citation>
    <scope>NUCLEOTIDE SEQUENCE [LARGE SCALE GENOMIC DNA]</scope>
    <source>
        <strain>ATCC 700396 / NCK56 / N2 / NCFM</strain>
    </source>
</reference>
<accession>Q5FIF8</accession>
<protein>
    <recommendedName>
        <fullName evidence="1">N-acetylmuramic acid 6-phosphate etherase</fullName>
        <shortName evidence="1">MurNAc-6-P etherase</shortName>
        <ecNumber evidence="1">4.2.1.126</ecNumber>
    </recommendedName>
    <alternativeName>
        <fullName evidence="1">N-acetylmuramic acid 6-phosphate hydrolase</fullName>
    </alternativeName>
    <alternativeName>
        <fullName evidence="1">N-acetylmuramic acid 6-phosphate lyase</fullName>
    </alternativeName>
</protein>
<evidence type="ECO:0000255" key="1">
    <source>
        <dbReference type="HAMAP-Rule" id="MF_00068"/>
    </source>
</evidence>
<keyword id="KW-0119">Carbohydrate metabolism</keyword>
<keyword id="KW-0456">Lyase</keyword>
<keyword id="KW-1185">Reference proteome</keyword>
<sequence length="298" mass="31902">MEIKNLTTEQRNPASIHIDTVSTVEMVKIMNEEDQKVALAVGNQDEQIARAIDEAANRYKKGGRLIYLGAGTSGRLGVLDAAELVPTYGIKPERAIGLIAGGPGAMYKAVEGAEDDTNLGAEDLKDLNLNSQDIVLGLAASGRTPYVIGGLEYANQIGAFTISIACVKDSEIGKHAEVAIEAVVGPEIVTGSTRMKSGTAQKMILNMISTGVMIRQGKVFENVMIDVMPTNSKLVDRASRIISAVTDATQEEALQTLKKAENNVPLAITMIKTESNKDEAQKLLEQYNGNVSEVIKNN</sequence>
<dbReference type="EC" id="4.2.1.126" evidence="1"/>
<dbReference type="EMBL" id="CP000033">
    <property type="protein sequence ID" value="AAV43516.1"/>
    <property type="molecule type" value="Genomic_DNA"/>
</dbReference>
<dbReference type="RefSeq" id="WP_011254545.1">
    <property type="nucleotide sequence ID" value="NC_006814.3"/>
</dbReference>
<dbReference type="RefSeq" id="YP_194547.1">
    <property type="nucleotide sequence ID" value="NC_006814.3"/>
</dbReference>
<dbReference type="SMR" id="Q5FIF8"/>
<dbReference type="STRING" id="272621.LBA1704"/>
<dbReference type="GeneID" id="93289230"/>
<dbReference type="KEGG" id="lac:LBA1704"/>
<dbReference type="PATRIC" id="fig|272621.13.peg.1624"/>
<dbReference type="eggNOG" id="COG2103">
    <property type="taxonomic scope" value="Bacteria"/>
</dbReference>
<dbReference type="HOGENOM" id="CLU_049049_1_1_9"/>
<dbReference type="OrthoDB" id="9813395at2"/>
<dbReference type="BioCyc" id="LACI272621:G1G49-1672-MONOMER"/>
<dbReference type="UniPathway" id="UPA00342"/>
<dbReference type="Proteomes" id="UP000006381">
    <property type="component" value="Chromosome"/>
</dbReference>
<dbReference type="GO" id="GO:0097367">
    <property type="term" value="F:carbohydrate derivative binding"/>
    <property type="evidence" value="ECO:0007669"/>
    <property type="project" value="InterPro"/>
</dbReference>
<dbReference type="GO" id="GO:0016835">
    <property type="term" value="F:carbon-oxygen lyase activity"/>
    <property type="evidence" value="ECO:0007669"/>
    <property type="project" value="UniProtKB-UniRule"/>
</dbReference>
<dbReference type="GO" id="GO:0016803">
    <property type="term" value="F:ether hydrolase activity"/>
    <property type="evidence" value="ECO:0007669"/>
    <property type="project" value="TreeGrafter"/>
</dbReference>
<dbReference type="GO" id="GO:0046348">
    <property type="term" value="P:amino sugar catabolic process"/>
    <property type="evidence" value="ECO:0007669"/>
    <property type="project" value="InterPro"/>
</dbReference>
<dbReference type="GO" id="GO:0097173">
    <property type="term" value="P:N-acetylmuramic acid catabolic process"/>
    <property type="evidence" value="ECO:0007669"/>
    <property type="project" value="UniProtKB-UniPathway"/>
</dbReference>
<dbReference type="GO" id="GO:0009254">
    <property type="term" value="P:peptidoglycan turnover"/>
    <property type="evidence" value="ECO:0007669"/>
    <property type="project" value="TreeGrafter"/>
</dbReference>
<dbReference type="CDD" id="cd05007">
    <property type="entry name" value="SIS_Etherase"/>
    <property type="match status" value="1"/>
</dbReference>
<dbReference type="FunFam" id="3.40.50.10490:FF:000014">
    <property type="entry name" value="N-acetylmuramic acid 6-phosphate etherase"/>
    <property type="match status" value="1"/>
</dbReference>
<dbReference type="Gene3D" id="1.10.8.1080">
    <property type="match status" value="1"/>
</dbReference>
<dbReference type="Gene3D" id="3.40.50.10490">
    <property type="entry name" value="Glucose-6-phosphate isomerase like protein, domain 1"/>
    <property type="match status" value="1"/>
</dbReference>
<dbReference type="HAMAP" id="MF_00068">
    <property type="entry name" value="MurQ"/>
    <property type="match status" value="1"/>
</dbReference>
<dbReference type="InterPro" id="IPR005488">
    <property type="entry name" value="Etherase_MurQ"/>
</dbReference>
<dbReference type="InterPro" id="IPR005486">
    <property type="entry name" value="Glucokinase_regulatory_CS"/>
</dbReference>
<dbReference type="InterPro" id="IPR040190">
    <property type="entry name" value="MURQ/GCKR"/>
</dbReference>
<dbReference type="InterPro" id="IPR001347">
    <property type="entry name" value="SIS_dom"/>
</dbReference>
<dbReference type="InterPro" id="IPR046348">
    <property type="entry name" value="SIS_dom_sf"/>
</dbReference>
<dbReference type="NCBIfam" id="TIGR00274">
    <property type="entry name" value="N-acetylmuramic acid 6-phosphate etherase"/>
    <property type="match status" value="1"/>
</dbReference>
<dbReference type="NCBIfam" id="NF003915">
    <property type="entry name" value="PRK05441.1"/>
    <property type="match status" value="1"/>
</dbReference>
<dbReference type="NCBIfam" id="NF009222">
    <property type="entry name" value="PRK12570.1"/>
    <property type="match status" value="1"/>
</dbReference>
<dbReference type="PANTHER" id="PTHR10088">
    <property type="entry name" value="GLUCOKINASE REGULATORY PROTEIN"/>
    <property type="match status" value="1"/>
</dbReference>
<dbReference type="PANTHER" id="PTHR10088:SF4">
    <property type="entry name" value="GLUCOKINASE REGULATORY PROTEIN"/>
    <property type="match status" value="1"/>
</dbReference>
<dbReference type="Pfam" id="PF22645">
    <property type="entry name" value="GKRP_SIS_N"/>
    <property type="match status" value="1"/>
</dbReference>
<dbReference type="SUPFAM" id="SSF53697">
    <property type="entry name" value="SIS domain"/>
    <property type="match status" value="1"/>
</dbReference>
<dbReference type="PROSITE" id="PS01272">
    <property type="entry name" value="GCKR"/>
    <property type="match status" value="1"/>
</dbReference>
<dbReference type="PROSITE" id="PS51464">
    <property type="entry name" value="SIS"/>
    <property type="match status" value="1"/>
</dbReference>
<proteinExistence type="inferred from homology"/>
<organism>
    <name type="scientific">Lactobacillus acidophilus (strain ATCC 700396 / NCK56 / N2 / NCFM)</name>
    <dbReference type="NCBI Taxonomy" id="272621"/>
    <lineage>
        <taxon>Bacteria</taxon>
        <taxon>Bacillati</taxon>
        <taxon>Bacillota</taxon>
        <taxon>Bacilli</taxon>
        <taxon>Lactobacillales</taxon>
        <taxon>Lactobacillaceae</taxon>
        <taxon>Lactobacillus</taxon>
    </lineage>
</organism>